<reference key="1">
    <citation type="submission" date="2009-01" db="EMBL/GenBank/DDBJ databases">
        <title>Complete sequence of Geobacter sp. FRC-32.</title>
        <authorList>
            <consortium name="US DOE Joint Genome Institute"/>
            <person name="Lucas S."/>
            <person name="Copeland A."/>
            <person name="Lapidus A."/>
            <person name="Glavina del Rio T."/>
            <person name="Dalin E."/>
            <person name="Tice H."/>
            <person name="Bruce D."/>
            <person name="Goodwin L."/>
            <person name="Pitluck S."/>
            <person name="Saunders E."/>
            <person name="Brettin T."/>
            <person name="Detter J.C."/>
            <person name="Han C."/>
            <person name="Larimer F."/>
            <person name="Land M."/>
            <person name="Hauser L."/>
            <person name="Kyrpides N."/>
            <person name="Ovchinnikova G."/>
            <person name="Kostka J."/>
            <person name="Richardson P."/>
        </authorList>
    </citation>
    <scope>NUCLEOTIDE SEQUENCE [LARGE SCALE GENOMIC DNA]</scope>
    <source>
        <strain>DSM 22248 / JCM 15807 / FRC-32</strain>
    </source>
</reference>
<organism>
    <name type="scientific">Geotalea daltonii (strain DSM 22248 / JCM 15807 / FRC-32)</name>
    <name type="common">Geobacter daltonii</name>
    <dbReference type="NCBI Taxonomy" id="316067"/>
    <lineage>
        <taxon>Bacteria</taxon>
        <taxon>Pseudomonadati</taxon>
        <taxon>Thermodesulfobacteriota</taxon>
        <taxon>Desulfuromonadia</taxon>
        <taxon>Geobacterales</taxon>
        <taxon>Geobacteraceae</taxon>
        <taxon>Geotalea</taxon>
    </lineage>
</organism>
<sequence>MRLIVAGGGTGGHLFPGIAVAEEFLARNSANEVLFIGTERGIEARLLPKLGYRLECISASGIKGQSPLTKVKSAALLLYGYSQSRKILKEFRPDVVLGVGGYASAPVVLSARGLQIRRFIHEQNAIPGLTNKVLARIADKVFISIEESRKFFPEDRTMLTGNPLRKEILWNVQQGKTEPKGGSLRLLVFGGSAGAHRINTAMVEALPHLAKVKEHLLITHQTGEKDHGEMKKAYGAAGFNAEVTPFIDNMAAAYAAADFIVCRAGATTLAEVAVSGKACIFIPYPYAADDHQRRNAEALLKEDAGFMILERELTGDTLAGQIIRLMQEPELVEKTAANIRKFGQLDAAQVIVDEMTGKQEPLCTEK</sequence>
<proteinExistence type="inferred from homology"/>
<name>MURG_GEODF</name>
<comment type="function">
    <text evidence="1">Cell wall formation. Catalyzes the transfer of a GlcNAc subunit on undecaprenyl-pyrophosphoryl-MurNAc-pentapeptide (lipid intermediate I) to form undecaprenyl-pyrophosphoryl-MurNAc-(pentapeptide)GlcNAc (lipid intermediate II).</text>
</comment>
<comment type="catalytic activity">
    <reaction evidence="1">
        <text>di-trans,octa-cis-undecaprenyl diphospho-N-acetyl-alpha-D-muramoyl-L-alanyl-D-glutamyl-meso-2,6-diaminopimeloyl-D-alanyl-D-alanine + UDP-N-acetyl-alpha-D-glucosamine = di-trans,octa-cis-undecaprenyl diphospho-[N-acetyl-alpha-D-glucosaminyl-(1-&gt;4)]-N-acetyl-alpha-D-muramoyl-L-alanyl-D-glutamyl-meso-2,6-diaminopimeloyl-D-alanyl-D-alanine + UDP + H(+)</text>
        <dbReference type="Rhea" id="RHEA:31227"/>
        <dbReference type="ChEBI" id="CHEBI:15378"/>
        <dbReference type="ChEBI" id="CHEBI:57705"/>
        <dbReference type="ChEBI" id="CHEBI:58223"/>
        <dbReference type="ChEBI" id="CHEBI:61387"/>
        <dbReference type="ChEBI" id="CHEBI:61388"/>
        <dbReference type="EC" id="2.4.1.227"/>
    </reaction>
</comment>
<comment type="pathway">
    <text evidence="1">Cell wall biogenesis; peptidoglycan biosynthesis.</text>
</comment>
<comment type="subcellular location">
    <subcellularLocation>
        <location evidence="1">Cell inner membrane</location>
        <topology evidence="1">Peripheral membrane protein</topology>
        <orientation evidence="1">Cytoplasmic side</orientation>
    </subcellularLocation>
</comment>
<comment type="similarity">
    <text evidence="1">Belongs to the glycosyltransferase 28 family. MurG subfamily.</text>
</comment>
<evidence type="ECO:0000255" key="1">
    <source>
        <dbReference type="HAMAP-Rule" id="MF_00033"/>
    </source>
</evidence>
<gene>
    <name evidence="1" type="primary">murG</name>
    <name type="ordered locus">Geob_0780</name>
</gene>
<feature type="chain" id="PRO_1000192131" description="UDP-N-acetylglucosamine--N-acetylmuramyl-(pentapeptide) pyrophosphoryl-undecaprenol N-acetylglucosamine transferase">
    <location>
        <begin position="1"/>
        <end position="366"/>
    </location>
</feature>
<feature type="binding site" evidence="1">
    <location>
        <begin position="10"/>
        <end position="12"/>
    </location>
    <ligand>
        <name>UDP-N-acetyl-alpha-D-glucosamine</name>
        <dbReference type="ChEBI" id="CHEBI:57705"/>
    </ligand>
</feature>
<feature type="binding site" evidence="1">
    <location>
        <position position="124"/>
    </location>
    <ligand>
        <name>UDP-N-acetyl-alpha-D-glucosamine</name>
        <dbReference type="ChEBI" id="CHEBI:57705"/>
    </ligand>
</feature>
<feature type="binding site" evidence="1">
    <location>
        <position position="165"/>
    </location>
    <ligand>
        <name>UDP-N-acetyl-alpha-D-glucosamine</name>
        <dbReference type="ChEBI" id="CHEBI:57705"/>
    </ligand>
</feature>
<feature type="binding site" evidence="1">
    <location>
        <position position="192"/>
    </location>
    <ligand>
        <name>UDP-N-acetyl-alpha-D-glucosamine</name>
        <dbReference type="ChEBI" id="CHEBI:57705"/>
    </ligand>
</feature>
<feature type="binding site" evidence="1">
    <location>
        <position position="247"/>
    </location>
    <ligand>
        <name>UDP-N-acetyl-alpha-D-glucosamine</name>
        <dbReference type="ChEBI" id="CHEBI:57705"/>
    </ligand>
</feature>
<feature type="binding site" evidence="1">
    <location>
        <position position="292"/>
    </location>
    <ligand>
        <name>UDP-N-acetyl-alpha-D-glucosamine</name>
        <dbReference type="ChEBI" id="CHEBI:57705"/>
    </ligand>
</feature>
<accession>B9M172</accession>
<dbReference type="EC" id="2.4.1.227" evidence="1"/>
<dbReference type="EMBL" id="CP001390">
    <property type="protein sequence ID" value="ACM19142.1"/>
    <property type="molecule type" value="Genomic_DNA"/>
</dbReference>
<dbReference type="RefSeq" id="WP_012645871.1">
    <property type="nucleotide sequence ID" value="NC_011979.1"/>
</dbReference>
<dbReference type="SMR" id="B9M172"/>
<dbReference type="STRING" id="316067.Geob_0780"/>
<dbReference type="CAZy" id="GT28">
    <property type="family name" value="Glycosyltransferase Family 28"/>
</dbReference>
<dbReference type="KEGG" id="geo:Geob_0780"/>
<dbReference type="eggNOG" id="COG0707">
    <property type="taxonomic scope" value="Bacteria"/>
</dbReference>
<dbReference type="HOGENOM" id="CLU_037404_0_1_7"/>
<dbReference type="OrthoDB" id="9808936at2"/>
<dbReference type="UniPathway" id="UPA00219"/>
<dbReference type="Proteomes" id="UP000007721">
    <property type="component" value="Chromosome"/>
</dbReference>
<dbReference type="GO" id="GO:0005886">
    <property type="term" value="C:plasma membrane"/>
    <property type="evidence" value="ECO:0007669"/>
    <property type="project" value="UniProtKB-SubCell"/>
</dbReference>
<dbReference type="GO" id="GO:0051991">
    <property type="term" value="F:UDP-N-acetyl-D-glucosamine:N-acetylmuramoyl-L-alanyl-D-glutamyl-meso-2,6-diaminopimelyl-D-alanyl-D-alanine-diphosphoundecaprenol 4-beta-N-acetylglucosaminlytransferase activity"/>
    <property type="evidence" value="ECO:0007669"/>
    <property type="project" value="RHEA"/>
</dbReference>
<dbReference type="GO" id="GO:0050511">
    <property type="term" value="F:undecaprenyldiphospho-muramoylpentapeptide beta-N-acetylglucosaminyltransferase activity"/>
    <property type="evidence" value="ECO:0007669"/>
    <property type="project" value="UniProtKB-UniRule"/>
</dbReference>
<dbReference type="GO" id="GO:0005975">
    <property type="term" value="P:carbohydrate metabolic process"/>
    <property type="evidence" value="ECO:0007669"/>
    <property type="project" value="InterPro"/>
</dbReference>
<dbReference type="GO" id="GO:0051301">
    <property type="term" value="P:cell division"/>
    <property type="evidence" value="ECO:0007669"/>
    <property type="project" value="UniProtKB-KW"/>
</dbReference>
<dbReference type="GO" id="GO:0071555">
    <property type="term" value="P:cell wall organization"/>
    <property type="evidence" value="ECO:0007669"/>
    <property type="project" value="UniProtKB-KW"/>
</dbReference>
<dbReference type="GO" id="GO:0030259">
    <property type="term" value="P:lipid glycosylation"/>
    <property type="evidence" value="ECO:0007669"/>
    <property type="project" value="UniProtKB-UniRule"/>
</dbReference>
<dbReference type="GO" id="GO:0009252">
    <property type="term" value="P:peptidoglycan biosynthetic process"/>
    <property type="evidence" value="ECO:0007669"/>
    <property type="project" value="UniProtKB-UniRule"/>
</dbReference>
<dbReference type="GO" id="GO:0008360">
    <property type="term" value="P:regulation of cell shape"/>
    <property type="evidence" value="ECO:0007669"/>
    <property type="project" value="UniProtKB-KW"/>
</dbReference>
<dbReference type="CDD" id="cd03785">
    <property type="entry name" value="GT28_MurG"/>
    <property type="match status" value="1"/>
</dbReference>
<dbReference type="Gene3D" id="3.40.50.2000">
    <property type="entry name" value="Glycogen Phosphorylase B"/>
    <property type="match status" value="2"/>
</dbReference>
<dbReference type="HAMAP" id="MF_00033">
    <property type="entry name" value="MurG"/>
    <property type="match status" value="1"/>
</dbReference>
<dbReference type="InterPro" id="IPR006009">
    <property type="entry name" value="GlcNAc_MurG"/>
</dbReference>
<dbReference type="InterPro" id="IPR007235">
    <property type="entry name" value="Glyco_trans_28_C"/>
</dbReference>
<dbReference type="InterPro" id="IPR004276">
    <property type="entry name" value="GlycoTrans_28_N"/>
</dbReference>
<dbReference type="NCBIfam" id="TIGR01133">
    <property type="entry name" value="murG"/>
    <property type="match status" value="1"/>
</dbReference>
<dbReference type="PANTHER" id="PTHR21015:SF22">
    <property type="entry name" value="GLYCOSYLTRANSFERASE"/>
    <property type="match status" value="1"/>
</dbReference>
<dbReference type="PANTHER" id="PTHR21015">
    <property type="entry name" value="UDP-N-ACETYLGLUCOSAMINE--N-ACETYLMURAMYL-(PENTAPEPTIDE) PYROPHOSPHORYL-UNDECAPRENOL N-ACETYLGLUCOSAMINE TRANSFERASE 1"/>
    <property type="match status" value="1"/>
</dbReference>
<dbReference type="Pfam" id="PF04101">
    <property type="entry name" value="Glyco_tran_28_C"/>
    <property type="match status" value="1"/>
</dbReference>
<dbReference type="Pfam" id="PF03033">
    <property type="entry name" value="Glyco_transf_28"/>
    <property type="match status" value="1"/>
</dbReference>
<dbReference type="SUPFAM" id="SSF53756">
    <property type="entry name" value="UDP-Glycosyltransferase/glycogen phosphorylase"/>
    <property type="match status" value="1"/>
</dbReference>
<keyword id="KW-0131">Cell cycle</keyword>
<keyword id="KW-0132">Cell division</keyword>
<keyword id="KW-0997">Cell inner membrane</keyword>
<keyword id="KW-1003">Cell membrane</keyword>
<keyword id="KW-0133">Cell shape</keyword>
<keyword id="KW-0961">Cell wall biogenesis/degradation</keyword>
<keyword id="KW-0328">Glycosyltransferase</keyword>
<keyword id="KW-0472">Membrane</keyword>
<keyword id="KW-0573">Peptidoglycan synthesis</keyword>
<keyword id="KW-1185">Reference proteome</keyword>
<keyword id="KW-0808">Transferase</keyword>
<protein>
    <recommendedName>
        <fullName evidence="1">UDP-N-acetylglucosamine--N-acetylmuramyl-(pentapeptide) pyrophosphoryl-undecaprenol N-acetylglucosamine transferase</fullName>
        <ecNumber evidence="1">2.4.1.227</ecNumber>
    </recommendedName>
    <alternativeName>
        <fullName evidence="1">Undecaprenyl-PP-MurNAc-pentapeptide-UDPGlcNAc GlcNAc transferase</fullName>
    </alternativeName>
</protein>